<feature type="chain" id="PRO_0000113221" description="Aspartate carbamoyltransferase catalytic subunit">
    <location>
        <begin position="1"/>
        <end position="302"/>
    </location>
</feature>
<feature type="binding site" evidence="1">
    <location>
        <position position="54"/>
    </location>
    <ligand>
        <name>carbamoyl phosphate</name>
        <dbReference type="ChEBI" id="CHEBI:58228"/>
    </ligand>
</feature>
<feature type="binding site" evidence="1">
    <location>
        <position position="55"/>
    </location>
    <ligand>
        <name>carbamoyl phosphate</name>
        <dbReference type="ChEBI" id="CHEBI:58228"/>
    </ligand>
</feature>
<feature type="binding site" evidence="1">
    <location>
        <position position="82"/>
    </location>
    <ligand>
        <name>L-aspartate</name>
        <dbReference type="ChEBI" id="CHEBI:29991"/>
    </ligand>
</feature>
<feature type="binding site" evidence="1">
    <location>
        <position position="104"/>
    </location>
    <ligand>
        <name>carbamoyl phosphate</name>
        <dbReference type="ChEBI" id="CHEBI:58228"/>
    </ligand>
</feature>
<feature type="binding site" evidence="1">
    <location>
        <position position="132"/>
    </location>
    <ligand>
        <name>carbamoyl phosphate</name>
        <dbReference type="ChEBI" id="CHEBI:58228"/>
    </ligand>
</feature>
<feature type="binding site" evidence="1">
    <location>
        <position position="135"/>
    </location>
    <ligand>
        <name>carbamoyl phosphate</name>
        <dbReference type="ChEBI" id="CHEBI:58228"/>
    </ligand>
</feature>
<feature type="binding site" evidence="1">
    <location>
        <position position="165"/>
    </location>
    <ligand>
        <name>L-aspartate</name>
        <dbReference type="ChEBI" id="CHEBI:29991"/>
    </ligand>
</feature>
<feature type="binding site" evidence="1">
    <location>
        <position position="217"/>
    </location>
    <ligand>
        <name>L-aspartate</name>
        <dbReference type="ChEBI" id="CHEBI:29991"/>
    </ligand>
</feature>
<feature type="binding site" evidence="1">
    <location>
        <position position="257"/>
    </location>
    <ligand>
        <name>carbamoyl phosphate</name>
        <dbReference type="ChEBI" id="CHEBI:58228"/>
    </ligand>
</feature>
<feature type="binding site" evidence="1">
    <location>
        <position position="258"/>
    </location>
    <ligand>
        <name>carbamoyl phosphate</name>
        <dbReference type="ChEBI" id="CHEBI:58228"/>
    </ligand>
</feature>
<keyword id="KW-0665">Pyrimidine biosynthesis</keyword>
<keyword id="KW-1185">Reference proteome</keyword>
<keyword id="KW-0808">Transferase</keyword>
<sequence length="302" mass="33015">MRHLLDFQGWSRTEVESLLDTARVMREVLERPIKKVPALQGFTVATVFFEPSTRTRISFELAARRMSADVVSFAAQTSSLQKGESYKDTLLTLEAMGVDAYVIRADSAGVPHQATRWVKGAVINGGDGRRAHPTQALLDAYTLLEALGTLEGKKVAIVGDILHSRVARSGAELLSLLGAQVFCAGPPSLLPQSLPGAHLTPRLEEALEEADAVMVLRLQKERMEAGLVHLEDYVARYQVTEKRLALAKPQAPLLHPGPMNRDVELEGTLADSARSLVNRQVQNGVAVRMAVLYHLLVGREKA</sequence>
<organism>
    <name type="scientific">Thermus thermophilus (strain ATCC 27634 / DSM 579 / HB8)</name>
    <dbReference type="NCBI Taxonomy" id="300852"/>
    <lineage>
        <taxon>Bacteria</taxon>
        <taxon>Thermotogati</taxon>
        <taxon>Deinococcota</taxon>
        <taxon>Deinococci</taxon>
        <taxon>Thermales</taxon>
        <taxon>Thermaceae</taxon>
        <taxon>Thermus</taxon>
    </lineage>
</organism>
<dbReference type="EC" id="2.1.3.2" evidence="1"/>
<dbReference type="EMBL" id="AP008226">
    <property type="protein sequence ID" value="BAD70605.1"/>
    <property type="molecule type" value="Genomic_DNA"/>
</dbReference>
<dbReference type="RefSeq" id="WP_011172874.1">
    <property type="nucleotide sequence ID" value="NC_006461.1"/>
</dbReference>
<dbReference type="RefSeq" id="YP_144048.1">
    <property type="nucleotide sequence ID" value="NC_006461.1"/>
</dbReference>
<dbReference type="SMR" id="Q5SK66"/>
<dbReference type="EnsemblBacteria" id="BAD70605">
    <property type="protein sequence ID" value="BAD70605"/>
    <property type="gene ID" value="BAD70605"/>
</dbReference>
<dbReference type="GeneID" id="3169148"/>
<dbReference type="KEGG" id="ttj:TTHA0782"/>
<dbReference type="PATRIC" id="fig|300852.9.peg.775"/>
<dbReference type="eggNOG" id="COG0540">
    <property type="taxonomic scope" value="Bacteria"/>
</dbReference>
<dbReference type="HOGENOM" id="CLU_043846_2_0_0"/>
<dbReference type="PhylomeDB" id="Q5SK66"/>
<dbReference type="BRENDA" id="2.1.3.2">
    <property type="organism ID" value="2305"/>
</dbReference>
<dbReference type="UniPathway" id="UPA00070">
    <property type="reaction ID" value="UER00116"/>
</dbReference>
<dbReference type="Proteomes" id="UP000000532">
    <property type="component" value="Chromosome"/>
</dbReference>
<dbReference type="GO" id="GO:0005829">
    <property type="term" value="C:cytosol"/>
    <property type="evidence" value="ECO:0007669"/>
    <property type="project" value="TreeGrafter"/>
</dbReference>
<dbReference type="GO" id="GO:0016597">
    <property type="term" value="F:amino acid binding"/>
    <property type="evidence" value="ECO:0007669"/>
    <property type="project" value="InterPro"/>
</dbReference>
<dbReference type="GO" id="GO:0004070">
    <property type="term" value="F:aspartate carbamoyltransferase activity"/>
    <property type="evidence" value="ECO:0007669"/>
    <property type="project" value="UniProtKB-UniRule"/>
</dbReference>
<dbReference type="GO" id="GO:0006207">
    <property type="term" value="P:'de novo' pyrimidine nucleobase biosynthetic process"/>
    <property type="evidence" value="ECO:0007669"/>
    <property type="project" value="InterPro"/>
</dbReference>
<dbReference type="GO" id="GO:0044205">
    <property type="term" value="P:'de novo' UMP biosynthetic process"/>
    <property type="evidence" value="ECO:0007669"/>
    <property type="project" value="UniProtKB-UniRule"/>
</dbReference>
<dbReference type="GO" id="GO:0006520">
    <property type="term" value="P:amino acid metabolic process"/>
    <property type="evidence" value="ECO:0007669"/>
    <property type="project" value="InterPro"/>
</dbReference>
<dbReference type="Gene3D" id="3.40.50.1370">
    <property type="entry name" value="Aspartate/ornithine carbamoyltransferase"/>
    <property type="match status" value="2"/>
</dbReference>
<dbReference type="HAMAP" id="MF_00001">
    <property type="entry name" value="Asp_carb_tr"/>
    <property type="match status" value="1"/>
</dbReference>
<dbReference type="InterPro" id="IPR006132">
    <property type="entry name" value="Asp/Orn_carbamoyltranf_P-bd"/>
</dbReference>
<dbReference type="InterPro" id="IPR006130">
    <property type="entry name" value="Asp/Orn_carbamoylTrfase"/>
</dbReference>
<dbReference type="InterPro" id="IPR036901">
    <property type="entry name" value="Asp/Orn_carbamoylTrfase_sf"/>
</dbReference>
<dbReference type="InterPro" id="IPR002082">
    <property type="entry name" value="Asp_carbamoyltransf"/>
</dbReference>
<dbReference type="InterPro" id="IPR006131">
    <property type="entry name" value="Asp_carbamoyltransf_Asp/Orn-bd"/>
</dbReference>
<dbReference type="NCBIfam" id="TIGR00670">
    <property type="entry name" value="asp_carb_tr"/>
    <property type="match status" value="1"/>
</dbReference>
<dbReference type="NCBIfam" id="NF002032">
    <property type="entry name" value="PRK00856.1"/>
    <property type="match status" value="1"/>
</dbReference>
<dbReference type="PANTHER" id="PTHR45753:SF6">
    <property type="entry name" value="ASPARTATE CARBAMOYLTRANSFERASE"/>
    <property type="match status" value="1"/>
</dbReference>
<dbReference type="PANTHER" id="PTHR45753">
    <property type="entry name" value="ORNITHINE CARBAMOYLTRANSFERASE, MITOCHONDRIAL"/>
    <property type="match status" value="1"/>
</dbReference>
<dbReference type="Pfam" id="PF00185">
    <property type="entry name" value="OTCace"/>
    <property type="match status" value="1"/>
</dbReference>
<dbReference type="Pfam" id="PF02729">
    <property type="entry name" value="OTCace_N"/>
    <property type="match status" value="1"/>
</dbReference>
<dbReference type="PRINTS" id="PR00100">
    <property type="entry name" value="AOTCASE"/>
</dbReference>
<dbReference type="PRINTS" id="PR00101">
    <property type="entry name" value="ATCASE"/>
</dbReference>
<dbReference type="SUPFAM" id="SSF53671">
    <property type="entry name" value="Aspartate/ornithine carbamoyltransferase"/>
    <property type="match status" value="1"/>
</dbReference>
<dbReference type="PROSITE" id="PS00097">
    <property type="entry name" value="CARBAMOYLTRANSFERASE"/>
    <property type="match status" value="1"/>
</dbReference>
<proteinExistence type="inferred from homology"/>
<comment type="function">
    <text evidence="1">Catalyzes the condensation of carbamoyl phosphate and aspartate to form carbamoyl aspartate and inorganic phosphate, the committed step in the de novo pyrimidine nucleotide biosynthesis pathway.</text>
</comment>
<comment type="catalytic activity">
    <reaction evidence="1">
        <text>carbamoyl phosphate + L-aspartate = N-carbamoyl-L-aspartate + phosphate + H(+)</text>
        <dbReference type="Rhea" id="RHEA:20013"/>
        <dbReference type="ChEBI" id="CHEBI:15378"/>
        <dbReference type="ChEBI" id="CHEBI:29991"/>
        <dbReference type="ChEBI" id="CHEBI:32814"/>
        <dbReference type="ChEBI" id="CHEBI:43474"/>
        <dbReference type="ChEBI" id="CHEBI:58228"/>
        <dbReference type="EC" id="2.1.3.2"/>
    </reaction>
</comment>
<comment type="pathway">
    <text evidence="1">Pyrimidine metabolism; UMP biosynthesis via de novo pathway; (S)-dihydroorotate from bicarbonate: step 2/3.</text>
</comment>
<comment type="subunit">
    <text evidence="1">Heterododecamer (2C3:3R2) of six catalytic PyrB chains organized as two trimers (C3), and six regulatory PyrI chains organized as three dimers (R2).</text>
</comment>
<comment type="similarity">
    <text evidence="1">Belongs to the aspartate/ornithine carbamoyltransferase superfamily. ATCase family.</text>
</comment>
<protein>
    <recommendedName>
        <fullName evidence="1">Aspartate carbamoyltransferase catalytic subunit</fullName>
        <ecNumber evidence="1">2.1.3.2</ecNumber>
    </recommendedName>
    <alternativeName>
        <fullName evidence="1">Aspartate transcarbamylase</fullName>
        <shortName evidence="1">ATCase</shortName>
    </alternativeName>
</protein>
<name>PYRB_THET8</name>
<accession>Q5SK66</accession>
<reference key="1">
    <citation type="submission" date="2004-11" db="EMBL/GenBank/DDBJ databases">
        <title>Complete genome sequence of Thermus thermophilus HB8.</title>
        <authorList>
            <person name="Masui R."/>
            <person name="Kurokawa K."/>
            <person name="Nakagawa N."/>
            <person name="Tokunaga F."/>
            <person name="Koyama Y."/>
            <person name="Shibata T."/>
            <person name="Oshima T."/>
            <person name="Yokoyama S."/>
            <person name="Yasunaga T."/>
            <person name="Kuramitsu S."/>
        </authorList>
    </citation>
    <scope>NUCLEOTIDE SEQUENCE [LARGE SCALE GENOMIC DNA]</scope>
    <source>
        <strain>ATCC 27634 / DSM 579 / HB8</strain>
    </source>
</reference>
<evidence type="ECO:0000255" key="1">
    <source>
        <dbReference type="HAMAP-Rule" id="MF_00001"/>
    </source>
</evidence>
<gene>
    <name evidence="1" type="primary">pyrB</name>
    <name type="ordered locus">TTHA0782</name>
</gene>